<keyword id="KW-0002">3D-structure</keyword>
<keyword id="KW-0240">DNA-directed RNA polymerase</keyword>
<keyword id="KW-0479">Metal-binding</keyword>
<keyword id="KW-0539">Nucleus</keyword>
<keyword id="KW-1267">Proteomics identification</keyword>
<keyword id="KW-1185">Reference proteome</keyword>
<keyword id="KW-0804">Transcription</keyword>
<keyword id="KW-0862">Zinc</keyword>
<keyword id="KW-0863">Zinc-finger</keyword>
<feature type="chain" id="PRO_0000159750" description="DNA-directed RNA polymerases I, II, and III subunit RPABC4">
    <location>
        <begin position="1"/>
        <end position="58"/>
    </location>
</feature>
<feature type="zinc finger region" description="C4-type" evidence="7 8 9 18 20 21">
    <location>
        <begin position="19"/>
        <end position="39"/>
    </location>
</feature>
<feature type="binding site" evidence="4 7 8 9 18 19 20 21">
    <location>
        <position position="19"/>
    </location>
    <ligand>
        <name>Zn(2+)</name>
        <dbReference type="ChEBI" id="CHEBI:29105"/>
    </ligand>
</feature>
<feature type="binding site" evidence="4 7 19 20">
    <location>
        <position position="22"/>
    </location>
    <ligand>
        <name>Zn(2+)</name>
        <dbReference type="ChEBI" id="CHEBI:29105"/>
    </ligand>
</feature>
<feature type="binding site" evidence="4 7 8 19 20 21">
    <location>
        <position position="36"/>
    </location>
    <ligand>
        <name>Zn(2+)</name>
        <dbReference type="ChEBI" id="CHEBI:29105"/>
    </ligand>
</feature>
<feature type="binding site" evidence="4 8 9 18 19 21">
    <location>
        <position position="39"/>
    </location>
    <ligand>
        <name>Zn(2+)</name>
        <dbReference type="ChEBI" id="CHEBI:29105"/>
    </ligand>
</feature>
<feature type="strand" evidence="22">
    <location>
        <begin position="16"/>
        <end position="22"/>
    </location>
</feature>
<feature type="strand" evidence="22">
    <location>
        <begin position="25"/>
        <end position="27"/>
    </location>
</feature>
<feature type="strand" evidence="22">
    <location>
        <begin position="30"/>
        <end position="32"/>
    </location>
</feature>
<feature type="turn" evidence="22">
    <location>
        <begin position="37"/>
        <end position="39"/>
    </location>
</feature>
<feature type="strand" evidence="22">
    <location>
        <begin position="42"/>
        <end position="46"/>
    </location>
</feature>
<feature type="strand" evidence="22">
    <location>
        <begin position="53"/>
        <end position="56"/>
    </location>
</feature>
<proteinExistence type="evidence at protein level"/>
<name>RPAB4_HUMAN</name>
<evidence type="ECO:0000250" key="1"/>
<evidence type="ECO:0000250" key="2">
    <source>
        <dbReference type="UniProtKB" id="P40422"/>
    </source>
</evidence>
<evidence type="ECO:0000269" key="3">
    <source>
    </source>
</evidence>
<evidence type="ECO:0000269" key="4">
    <source>
    </source>
</evidence>
<evidence type="ECO:0000269" key="5">
    <source>
    </source>
</evidence>
<evidence type="ECO:0000269" key="6">
    <source>
    </source>
</evidence>
<evidence type="ECO:0000269" key="7">
    <source>
    </source>
</evidence>
<evidence type="ECO:0000269" key="8">
    <source>
    </source>
</evidence>
<evidence type="ECO:0000269" key="9">
    <source>
    </source>
</evidence>
<evidence type="ECO:0000269" key="10">
    <source>
    </source>
</evidence>
<evidence type="ECO:0000269" key="11">
    <source>
    </source>
</evidence>
<evidence type="ECO:0000269" key="12">
    <source>
    </source>
</evidence>
<evidence type="ECO:0000269" key="13">
    <source>
    </source>
</evidence>
<evidence type="ECO:0000305" key="14"/>
<evidence type="ECO:0000305" key="15">
    <source>
    </source>
</evidence>
<evidence type="ECO:0000305" key="16">
    <source>
    </source>
</evidence>
<evidence type="ECO:0000312" key="17">
    <source>
        <dbReference type="HGNC" id="HGNC:9198"/>
    </source>
</evidence>
<evidence type="ECO:0000312" key="18">
    <source>
        <dbReference type="PDB" id="7DN3"/>
    </source>
</evidence>
<evidence type="ECO:0007744" key="19">
    <source>
        <dbReference type="PDB" id="5IY6"/>
    </source>
</evidence>
<evidence type="ECO:0007744" key="20">
    <source>
        <dbReference type="PDB" id="7AE1"/>
    </source>
</evidence>
<evidence type="ECO:0007744" key="21">
    <source>
        <dbReference type="PDB" id="7D58"/>
    </source>
</evidence>
<evidence type="ECO:0007829" key="22">
    <source>
        <dbReference type="PDB" id="7OB9"/>
    </source>
</evidence>
<sequence length="58" mass="7004">MDTQKDVQPPKQQPMIYICGECHTENEIKSRDPIRCRECGYRIMYKKRTKRLVVFDAR</sequence>
<protein>
    <recommendedName>
        <fullName>DNA-directed RNA polymerases I, II, and III subunit RPABC4</fullName>
        <shortName>RNA polymerases I, II, and III subunit ABC4</shortName>
    </recommendedName>
    <alternativeName>
        <fullName>ABC10-alpha</fullName>
    </alternativeName>
    <alternativeName>
        <fullName>DNA-directed RNA polymerase II subunit K</fullName>
    </alternativeName>
    <alternativeName>
        <fullName>RNA polymerase II 7.0 kDa subunit</fullName>
        <shortName>RPB7.0</shortName>
    </alternativeName>
    <alternativeName>
        <fullName>RPB10alpha</fullName>
    </alternativeName>
</protein>
<comment type="function">
    <text evidence="2 3 4 5 10 12 13">DNA-dependent RNA polymerase catalyzes the transcription of DNA into RNA using the four ribonucleoside triphosphates as substrates. Common component of RNA polymerases I, II and III which synthesize ribosomal RNA precursors, mRNA precursors and many functional non-coding RNAs, and a small RNAs, such as 5S rRNA and tRNAs, respectively.</text>
</comment>
<comment type="subunit">
    <text evidence="1 2 4 5 6 7 8 9 10 11 12 13">Component of the RNA polymerase I (Pol I), RNA polymerase II (Pol II) and RNA polymerase III (Pol III) complexes consisting of at least 13, 12 and 17 subunits, respectively (By similarity) (PubMed:27193682, PubMed:30190596, PubMed:33335104, PubMed:33558764, PubMed:33558766, PubMed:33674783, PubMed:34675218). Pol I complex consists of a ten-subunit catalytic core composed of POLR1A/RPA1, POLR1B/RPA2, POLR1C/RPAC1, POLR1D/RPAC2, POLR1H/RPA12, POLR2E/RPABC1, POLR2F/RPABC2, POLR2H/RPABC3, POLR2K/RPABC4 and POLR2L/RPABC5; a mobile stalk subunit POLR1F/RPA43 protruding from the core and additional subunits homologous to general transcription factors POLR1E/RPA49 and POLR1G/RPA34. Part of Pol I pre-initiation complex (PIC), in which Pol I core assembles with RRN3 and promoter-bound UTBF and SL1/TIF-IB complex (PubMed:34671025, PubMed:34887565, PubMed:36271492). Pol II complex contains a ten-subunit catalytic core composed of POLR2A/RPB1, POLR2B/RPB2, POLR2C/RPB3, POLR2I/RPB9, POLR2J/RPB11, POLR2E/RPABC1, POLR2F/RPABC2, POLR2H/RPABC3, POLR2K/RPABC4 and POLR2L/RPABC5 and a mobile stalk composed of two subunits POLR2D/RPB4 and POLR2G/RPB7. Part of Pol II(G) complex, in which Pol II core associates with an additional subunit POLR2M; unlike conventional Pol II, Pol II(G) functions as a transcriptional repressor. Part of TBP-based Pol II pre-initiation complex (PIC), in which Pol II core assembles with general transcription factors and other specific initiation factors including GTF2E1, GTF2E2, GTF2F1, GTF2F2, TCEA1, ERCC2, ERCC3, GTF2H2, GTF2H3, GTF2H4, GTF2H5, GTF2A1, GTF2A2, GTF2B and TBP; this large multi-subunit PIC complex mediates DNA unwinding and targets Pol II core to the transcription start site where the first phosphodiester bond forms (PubMed:27193682, PubMed:30190596). Pol III complex consists of a ten-subunit catalytic core composed of POLR3A/RPC1, POLR3B/RPC2, POLR1C/RPAC1, POLR1D/RPAC2, POLR3K/RPC10, POLR2E/RPABC1, POLR2F/RPABC2, POLR2H/RPABC3, POLR2K/RPABC4 and POLR2L/RPABC5; a mobile stalk composed of two subunits POLR3H/RPC8 and CRCP/RPC9, protruding from the core and functioning primarily in transcription initiation; and additional subunits homologous to general transcription factors of the RNA polymerase II machinery, POLR3C/RPC3-POLR3F/RPC6-POLR3G/RPC7 heterotrimer required for transcription initiation and POLR3D/RPC4-POLR3E/RPC5 heterodimer involved in both transcription initiation and termination (PubMed:33335104, PubMed:33558764, PubMed:33558766, PubMed:33674783, PubMed:34675218).</text>
</comment>
<comment type="interaction">
    <interactant intactId="EBI-395357">
        <id>P53803</id>
    </interactant>
    <interactant intactId="EBI-346595">
        <id>Q96B97</id>
        <label>SH3KBP1</label>
    </interactant>
    <organismsDiffer>false</organismsDiffer>
    <experiments>3</experiments>
</comment>
<comment type="subcellular location">
    <subcellularLocation>
        <location evidence="6">Nucleus</location>
    </subcellularLocation>
    <subcellularLocation>
        <location evidence="15 16">Nucleus</location>
        <location evidence="15 16">Nucleolus</location>
    </subcellularLocation>
</comment>
<comment type="similarity">
    <text evidence="14">Belongs to the archaeal Rpo12/eukaryotic RPC10 RNA polymerase subunit family.</text>
</comment>
<gene>
    <name evidence="17" type="primary">POLR2K</name>
</gene>
<dbReference type="EMBL" id="Z47727">
    <property type="protein sequence ID" value="CAA87656.1"/>
    <property type="molecule type" value="mRNA"/>
</dbReference>
<dbReference type="EMBL" id="AJ252078">
    <property type="protein sequence ID" value="CAB91873.1"/>
    <property type="molecule type" value="Genomic_DNA"/>
</dbReference>
<dbReference type="EMBL" id="CR456870">
    <property type="protein sequence ID" value="CAG33151.1"/>
    <property type="molecule type" value="mRNA"/>
</dbReference>
<dbReference type="EMBL" id="CH471060">
    <property type="protein sequence ID" value="EAW91798.1"/>
    <property type="molecule type" value="Genomic_DNA"/>
</dbReference>
<dbReference type="EMBL" id="BC000806">
    <property type="protein sequence ID" value="AAH00806.1"/>
    <property type="molecule type" value="mRNA"/>
</dbReference>
<dbReference type="EMBL" id="BC018157">
    <property type="protein sequence ID" value="AAH18157.1"/>
    <property type="molecule type" value="mRNA"/>
</dbReference>
<dbReference type="CCDS" id="CCDS6285.1"/>
<dbReference type="PIR" id="I37558">
    <property type="entry name" value="I37558"/>
</dbReference>
<dbReference type="RefSeq" id="NP_005025.1">
    <property type="nucleotide sequence ID" value="NM_005034.4"/>
</dbReference>
<dbReference type="PDB" id="5IY6">
    <property type="method" value="EM"/>
    <property type="resolution" value="7.20 A"/>
    <property type="chains" value="L=1-58"/>
</dbReference>
<dbReference type="PDB" id="5IY7">
    <property type="method" value="EM"/>
    <property type="resolution" value="8.60 A"/>
    <property type="chains" value="L=1-58"/>
</dbReference>
<dbReference type="PDB" id="5IY8">
    <property type="method" value="EM"/>
    <property type="resolution" value="7.90 A"/>
    <property type="chains" value="L=1-58"/>
</dbReference>
<dbReference type="PDB" id="5IY9">
    <property type="method" value="EM"/>
    <property type="resolution" value="6.30 A"/>
    <property type="chains" value="L=1-58"/>
</dbReference>
<dbReference type="PDB" id="5IYA">
    <property type="method" value="EM"/>
    <property type="resolution" value="5.40 A"/>
    <property type="chains" value="L=1-58"/>
</dbReference>
<dbReference type="PDB" id="5IYB">
    <property type="method" value="EM"/>
    <property type="resolution" value="3.90 A"/>
    <property type="chains" value="L=1-58"/>
</dbReference>
<dbReference type="PDB" id="5IYC">
    <property type="method" value="EM"/>
    <property type="resolution" value="3.90 A"/>
    <property type="chains" value="L=1-58"/>
</dbReference>
<dbReference type="PDB" id="5IYD">
    <property type="method" value="EM"/>
    <property type="resolution" value="3.90 A"/>
    <property type="chains" value="L=1-58"/>
</dbReference>
<dbReference type="PDB" id="6DRD">
    <property type="method" value="EM"/>
    <property type="resolution" value="3.90 A"/>
    <property type="chains" value="L=1-58"/>
</dbReference>
<dbReference type="PDB" id="6O9L">
    <property type="method" value="EM"/>
    <property type="resolution" value="7.20 A"/>
    <property type="chains" value="L=1-58"/>
</dbReference>
<dbReference type="PDB" id="6XRE">
    <property type="method" value="EM"/>
    <property type="resolution" value="4.60 A"/>
    <property type="chains" value="L=1-58"/>
</dbReference>
<dbReference type="PDB" id="7A6H">
    <property type="method" value="EM"/>
    <property type="resolution" value="3.30 A"/>
    <property type="chains" value="L=1-58"/>
</dbReference>
<dbReference type="PDB" id="7AE1">
    <property type="method" value="EM"/>
    <property type="resolution" value="2.80 A"/>
    <property type="chains" value="L=1-58"/>
</dbReference>
<dbReference type="PDB" id="7AE3">
    <property type="method" value="EM"/>
    <property type="resolution" value="3.10 A"/>
    <property type="chains" value="L=1-58"/>
</dbReference>
<dbReference type="PDB" id="7AEA">
    <property type="method" value="EM"/>
    <property type="resolution" value="3.40 A"/>
    <property type="chains" value="L=1-58"/>
</dbReference>
<dbReference type="PDB" id="7AST">
    <property type="method" value="EM"/>
    <property type="resolution" value="4.00 A"/>
    <property type="chains" value="C=1-58"/>
</dbReference>
<dbReference type="PDB" id="7D58">
    <property type="method" value="EM"/>
    <property type="resolution" value="2.90 A"/>
    <property type="chains" value="L=1-58"/>
</dbReference>
<dbReference type="PDB" id="7D59">
    <property type="method" value="EM"/>
    <property type="resolution" value="3.10 A"/>
    <property type="chains" value="L=1-58"/>
</dbReference>
<dbReference type="PDB" id="7DN3">
    <property type="method" value="EM"/>
    <property type="resolution" value="3.50 A"/>
    <property type="chains" value="L=1-58"/>
</dbReference>
<dbReference type="PDB" id="7DU2">
    <property type="method" value="EM"/>
    <property type="resolution" value="3.35 A"/>
    <property type="chains" value="L=1-58"/>
</dbReference>
<dbReference type="PDB" id="7FJI">
    <property type="method" value="EM"/>
    <property type="resolution" value="3.60 A"/>
    <property type="chains" value="L=1-58"/>
</dbReference>
<dbReference type="PDB" id="7FJJ">
    <property type="method" value="EM"/>
    <property type="resolution" value="3.60 A"/>
    <property type="chains" value="L=1-58"/>
</dbReference>
<dbReference type="PDB" id="7LBM">
    <property type="method" value="EM"/>
    <property type="resolution" value="4.80 A"/>
    <property type="chains" value="L=1-58"/>
</dbReference>
<dbReference type="PDB" id="7OB9">
    <property type="method" value="EM"/>
    <property type="resolution" value="2.70 A"/>
    <property type="chains" value="L=1-58"/>
</dbReference>
<dbReference type="PDB" id="7OBA">
    <property type="method" value="EM"/>
    <property type="resolution" value="3.10 A"/>
    <property type="chains" value="L=1-58"/>
</dbReference>
<dbReference type="PDB" id="7OBB">
    <property type="method" value="EM"/>
    <property type="resolution" value="3.30 A"/>
    <property type="chains" value="L=1-58"/>
</dbReference>
<dbReference type="PDB" id="7VBA">
    <property type="method" value="EM"/>
    <property type="resolution" value="2.89 A"/>
    <property type="chains" value="L=1-58"/>
</dbReference>
<dbReference type="PDB" id="7VBB">
    <property type="method" value="EM"/>
    <property type="resolution" value="2.81 A"/>
    <property type="chains" value="L=1-58"/>
</dbReference>
<dbReference type="PDB" id="7VBC">
    <property type="method" value="EM"/>
    <property type="resolution" value="3.01 A"/>
    <property type="chains" value="L=1-58"/>
</dbReference>
<dbReference type="PDB" id="8A43">
    <property type="method" value="EM"/>
    <property type="resolution" value="4.09 A"/>
    <property type="chains" value="L=1-58"/>
</dbReference>
<dbReference type="PDB" id="8ITY">
    <property type="method" value="EM"/>
    <property type="resolution" value="3.90 A"/>
    <property type="chains" value="L=1-58"/>
</dbReference>
<dbReference type="PDB" id="8IUE">
    <property type="method" value="EM"/>
    <property type="resolution" value="4.10 A"/>
    <property type="chains" value="L=1-58"/>
</dbReference>
<dbReference type="PDB" id="8IUH">
    <property type="method" value="EM"/>
    <property type="resolution" value="3.40 A"/>
    <property type="chains" value="L=1-58"/>
</dbReference>
<dbReference type="PDB" id="9EHZ">
    <property type="method" value="EM"/>
    <property type="resolution" value="2.60 A"/>
    <property type="chains" value="L=1-58"/>
</dbReference>
<dbReference type="PDB" id="9EI1">
    <property type="method" value="EM"/>
    <property type="resolution" value="3.20 A"/>
    <property type="chains" value="L=1-58"/>
</dbReference>
<dbReference type="PDB" id="9EI3">
    <property type="method" value="EM"/>
    <property type="resolution" value="3.20 A"/>
    <property type="chains" value="L=1-58"/>
</dbReference>
<dbReference type="PDB" id="9EI4">
    <property type="method" value="EM"/>
    <property type="resolution" value="3.70 A"/>
    <property type="chains" value="L=1-58"/>
</dbReference>
<dbReference type="PDB" id="9FSO">
    <property type="method" value="EM"/>
    <property type="resolution" value="3.28 A"/>
    <property type="chains" value="P=1-58"/>
</dbReference>
<dbReference type="PDB" id="9FSP">
    <property type="method" value="EM"/>
    <property type="resolution" value="3.39 A"/>
    <property type="chains" value="P=1-58"/>
</dbReference>
<dbReference type="PDB" id="9FSQ">
    <property type="method" value="EM"/>
    <property type="resolution" value="3.51 A"/>
    <property type="chains" value="P=1-58"/>
</dbReference>
<dbReference type="PDB" id="9FSR">
    <property type="method" value="EM"/>
    <property type="resolution" value="3.76 A"/>
    <property type="chains" value="P=1-58"/>
</dbReference>
<dbReference type="PDB" id="9FSS">
    <property type="method" value="EM"/>
    <property type="resolution" value="4.14 A"/>
    <property type="chains" value="P=1-58"/>
</dbReference>
<dbReference type="PDBsum" id="5IY6"/>
<dbReference type="PDBsum" id="5IY7"/>
<dbReference type="PDBsum" id="5IY8"/>
<dbReference type="PDBsum" id="5IY9"/>
<dbReference type="PDBsum" id="5IYA"/>
<dbReference type="PDBsum" id="5IYB"/>
<dbReference type="PDBsum" id="5IYC"/>
<dbReference type="PDBsum" id="5IYD"/>
<dbReference type="PDBsum" id="6DRD"/>
<dbReference type="PDBsum" id="6O9L"/>
<dbReference type="PDBsum" id="6XRE"/>
<dbReference type="PDBsum" id="7A6H"/>
<dbReference type="PDBsum" id="7AE1"/>
<dbReference type="PDBsum" id="7AE3"/>
<dbReference type="PDBsum" id="7AEA"/>
<dbReference type="PDBsum" id="7AST"/>
<dbReference type="PDBsum" id="7D58"/>
<dbReference type="PDBsum" id="7D59"/>
<dbReference type="PDBsum" id="7DN3"/>
<dbReference type="PDBsum" id="7DU2"/>
<dbReference type="PDBsum" id="7FJI"/>
<dbReference type="PDBsum" id="7FJJ"/>
<dbReference type="PDBsum" id="7LBM"/>
<dbReference type="PDBsum" id="7OB9"/>
<dbReference type="PDBsum" id="7OBA"/>
<dbReference type="PDBsum" id="7OBB"/>
<dbReference type="PDBsum" id="7VBA"/>
<dbReference type="PDBsum" id="7VBB"/>
<dbReference type="PDBsum" id="7VBC"/>
<dbReference type="PDBsum" id="8A43"/>
<dbReference type="PDBsum" id="8ITY"/>
<dbReference type="PDBsum" id="8IUE"/>
<dbReference type="PDBsum" id="8IUH"/>
<dbReference type="PDBsum" id="9EHZ"/>
<dbReference type="PDBsum" id="9EI1"/>
<dbReference type="PDBsum" id="9EI3"/>
<dbReference type="PDBsum" id="9EI4"/>
<dbReference type="PDBsum" id="9FSO"/>
<dbReference type="PDBsum" id="9FSP"/>
<dbReference type="PDBsum" id="9FSQ"/>
<dbReference type="PDBsum" id="9FSR"/>
<dbReference type="PDBsum" id="9FSS"/>
<dbReference type="EMDB" id="EMD-11673"/>
<dbReference type="EMDB" id="EMD-11736"/>
<dbReference type="EMDB" id="EMD-11738"/>
<dbReference type="EMDB" id="EMD-11742"/>
<dbReference type="EMDB" id="EMD-11904"/>
<dbReference type="EMDB" id="EMD-12795"/>
<dbReference type="EMDB" id="EMD-12796"/>
<dbReference type="EMDB" id="EMD-12797"/>
<dbReference type="EMDB" id="EMD-15135"/>
<dbReference type="EMDB" id="EMD-22294"/>
<dbReference type="EMDB" id="EMD-23255"/>
<dbReference type="EMDB" id="EMD-30577"/>
<dbReference type="EMDB" id="EMD-30578"/>
<dbReference type="EMDB" id="EMD-30779"/>
<dbReference type="EMDB" id="EMD-30865"/>
<dbReference type="EMDB" id="EMD-31621"/>
<dbReference type="EMDB" id="EMD-31622"/>
<dbReference type="EMDB" id="EMD-31876"/>
<dbReference type="EMDB" id="EMD-31877"/>
<dbReference type="EMDB" id="EMD-31878"/>
<dbReference type="EMDB" id="EMD-35712"/>
<dbReference type="EMDB" id="EMD-35719"/>
<dbReference type="EMDB" id="EMD-35722"/>
<dbReference type="EMDB" id="EMD-48071"/>
<dbReference type="EMDB" id="EMD-48073"/>
<dbReference type="EMDB" id="EMD-48075"/>
<dbReference type="EMDB" id="EMD-48076"/>
<dbReference type="EMDB" id="EMD-50730"/>
<dbReference type="EMDB" id="EMD-50731"/>
<dbReference type="EMDB" id="EMD-50732"/>
<dbReference type="EMDB" id="EMD-50733"/>
<dbReference type="EMDB" id="EMD-50734"/>
<dbReference type="EMDB" id="EMD-7997"/>
<dbReference type="EMDB" id="EMD-8132"/>
<dbReference type="EMDB" id="EMD-8133"/>
<dbReference type="EMDB" id="EMD-8134"/>
<dbReference type="EMDB" id="EMD-8135"/>
<dbReference type="EMDB" id="EMD-8136"/>
<dbReference type="EMDB" id="EMD-8137"/>
<dbReference type="EMDB" id="EMD-8138"/>
<dbReference type="SMR" id="P53803"/>
<dbReference type="BioGRID" id="111436">
    <property type="interactions" value="156"/>
</dbReference>
<dbReference type="ComplexPortal" id="CPX-2386">
    <property type="entry name" value="DNA-directed RNA polymerase I complex"/>
</dbReference>
<dbReference type="ComplexPortal" id="CPX-2387">
    <property type="entry name" value="DNA-directed RNA polymerase II complex, Pol II(G) variant"/>
</dbReference>
<dbReference type="ComplexPortal" id="CPX-2393">
    <property type="entry name" value="DNA-directed RNA polymerase III complex, POLR3G variant"/>
</dbReference>
<dbReference type="ComplexPortal" id="CPX-7481">
    <property type="entry name" value="DNA-directed RNA polymerase II complex"/>
</dbReference>
<dbReference type="ComplexPortal" id="CPX-7482">
    <property type="entry name" value="DNA-directed RNA polymerase III complex, POLR3GL variant"/>
</dbReference>
<dbReference type="CORUM" id="P53803"/>
<dbReference type="DIP" id="DIP-32968N"/>
<dbReference type="FunCoup" id="P53803">
    <property type="interactions" value="2333"/>
</dbReference>
<dbReference type="IntAct" id="P53803">
    <property type="interactions" value="120"/>
</dbReference>
<dbReference type="MINT" id="P53803"/>
<dbReference type="STRING" id="9606.ENSP00000342889"/>
<dbReference type="GlyGen" id="P53803">
    <property type="glycosylation" value="1 site, 1 O-linked glycan (1 site)"/>
</dbReference>
<dbReference type="iPTMnet" id="P53803"/>
<dbReference type="PhosphoSitePlus" id="P53803"/>
<dbReference type="BioMuta" id="POLR2K"/>
<dbReference type="DMDM" id="1710664"/>
<dbReference type="jPOST" id="P53803"/>
<dbReference type="MassIVE" id="P53803"/>
<dbReference type="PaxDb" id="9606-ENSP00000342889"/>
<dbReference type="PeptideAtlas" id="P53803"/>
<dbReference type="ProteomicsDB" id="56622"/>
<dbReference type="Pumba" id="P53803"/>
<dbReference type="TopDownProteomics" id="P53803"/>
<dbReference type="Antibodypedia" id="26170">
    <property type="antibodies" value="103 antibodies from 21 providers"/>
</dbReference>
<dbReference type="DNASU" id="5440"/>
<dbReference type="Ensembl" id="ENST00000353107.8">
    <property type="protein sequence ID" value="ENSP00000342889.3"/>
    <property type="gene ID" value="ENSG00000147669.11"/>
</dbReference>
<dbReference type="GeneID" id="5440"/>
<dbReference type="KEGG" id="hsa:5440"/>
<dbReference type="MANE-Select" id="ENST00000353107.8">
    <property type="protein sequence ID" value="ENSP00000342889.3"/>
    <property type="RefSeq nucleotide sequence ID" value="NM_005034.4"/>
    <property type="RefSeq protein sequence ID" value="NP_005025.1"/>
</dbReference>
<dbReference type="UCSC" id="uc003yjf.4">
    <property type="organism name" value="human"/>
</dbReference>
<dbReference type="AGR" id="HGNC:9198"/>
<dbReference type="CTD" id="5440"/>
<dbReference type="DisGeNET" id="5440"/>
<dbReference type="GeneCards" id="POLR2K"/>
<dbReference type="HGNC" id="HGNC:9198">
    <property type="gene designation" value="POLR2K"/>
</dbReference>
<dbReference type="HPA" id="ENSG00000147669">
    <property type="expression patterns" value="Low tissue specificity"/>
</dbReference>
<dbReference type="MIM" id="606033">
    <property type="type" value="gene"/>
</dbReference>
<dbReference type="neXtProt" id="NX_P53803"/>
<dbReference type="OpenTargets" id="ENSG00000147669"/>
<dbReference type="PharmGKB" id="PA33518"/>
<dbReference type="VEuPathDB" id="HostDB:ENSG00000147669"/>
<dbReference type="eggNOG" id="KOG3507">
    <property type="taxonomic scope" value="Eukaryota"/>
</dbReference>
<dbReference type="GeneTree" id="ENSGT00390000008918"/>
<dbReference type="HOGENOM" id="CLU_179456_1_0_1"/>
<dbReference type="InParanoid" id="P53803"/>
<dbReference type="OMA" id="IYLCADC"/>
<dbReference type="OrthoDB" id="5585087at2759"/>
<dbReference type="PAN-GO" id="P53803">
    <property type="GO annotations" value="3 GO annotations based on evolutionary models"/>
</dbReference>
<dbReference type="PhylomeDB" id="P53803"/>
<dbReference type="TreeFam" id="TF103045"/>
<dbReference type="PathwayCommons" id="P53803"/>
<dbReference type="Reactome" id="R-HSA-112382">
    <property type="pathway name" value="Formation of RNA Pol II elongation complex"/>
</dbReference>
<dbReference type="Reactome" id="R-HSA-113418">
    <property type="pathway name" value="Formation of the Early Elongation Complex"/>
</dbReference>
<dbReference type="Reactome" id="R-HSA-167152">
    <property type="pathway name" value="Formation of HIV elongation complex in the absence of HIV Tat"/>
</dbReference>
<dbReference type="Reactome" id="R-HSA-167158">
    <property type="pathway name" value="Formation of the HIV-1 Early Elongation Complex"/>
</dbReference>
<dbReference type="Reactome" id="R-HSA-167160">
    <property type="pathway name" value="RNA Pol II CTD phosphorylation and interaction with CE during HIV infection"/>
</dbReference>
<dbReference type="Reactome" id="R-HSA-167161">
    <property type="pathway name" value="HIV Transcription Initiation"/>
</dbReference>
<dbReference type="Reactome" id="R-HSA-167162">
    <property type="pathway name" value="RNA Polymerase II HIV Promoter Escape"/>
</dbReference>
<dbReference type="Reactome" id="R-HSA-167172">
    <property type="pathway name" value="Transcription of the HIV genome"/>
</dbReference>
<dbReference type="Reactome" id="R-HSA-167200">
    <property type="pathway name" value="Formation of HIV-1 elongation complex containing HIV-1 Tat"/>
</dbReference>
<dbReference type="Reactome" id="R-HSA-167238">
    <property type="pathway name" value="Pausing and recovery of Tat-mediated HIV elongation"/>
</dbReference>
<dbReference type="Reactome" id="R-HSA-167242">
    <property type="pathway name" value="Abortive elongation of HIV-1 transcript in the absence of Tat"/>
</dbReference>
<dbReference type="Reactome" id="R-HSA-167243">
    <property type="pathway name" value="Tat-mediated HIV elongation arrest and recovery"/>
</dbReference>
<dbReference type="Reactome" id="R-HSA-167246">
    <property type="pathway name" value="Tat-mediated elongation of the HIV-1 transcript"/>
</dbReference>
<dbReference type="Reactome" id="R-HSA-167287">
    <property type="pathway name" value="HIV elongation arrest and recovery"/>
</dbReference>
<dbReference type="Reactome" id="R-HSA-167290">
    <property type="pathway name" value="Pausing and recovery of HIV elongation"/>
</dbReference>
<dbReference type="Reactome" id="R-HSA-168325">
    <property type="pathway name" value="Viral Messenger RNA Synthesis"/>
</dbReference>
<dbReference type="Reactome" id="R-HSA-1834949">
    <property type="pathway name" value="Cytosolic sensors of pathogen-associated DNA"/>
</dbReference>
<dbReference type="Reactome" id="R-HSA-203927">
    <property type="pathway name" value="MicroRNA (miRNA) biogenesis"/>
</dbReference>
<dbReference type="Reactome" id="R-HSA-427413">
    <property type="pathway name" value="NoRC negatively regulates rRNA expression"/>
</dbReference>
<dbReference type="Reactome" id="R-HSA-5250924">
    <property type="pathway name" value="B-WICH complex positively regulates rRNA expression"/>
</dbReference>
<dbReference type="Reactome" id="R-HSA-5578749">
    <property type="pathway name" value="Transcriptional regulation by small RNAs"/>
</dbReference>
<dbReference type="Reactome" id="R-HSA-5601884">
    <property type="pathway name" value="PIWI-interacting RNA (piRNA) biogenesis"/>
</dbReference>
<dbReference type="Reactome" id="R-HSA-5617472">
    <property type="pathway name" value="Activation of anterior HOX genes in hindbrain development during early embryogenesis"/>
</dbReference>
<dbReference type="Reactome" id="R-HSA-674695">
    <property type="pathway name" value="RNA Polymerase II Pre-transcription Events"/>
</dbReference>
<dbReference type="Reactome" id="R-HSA-6781823">
    <property type="pathway name" value="Formation of TC-NER Pre-Incision Complex"/>
</dbReference>
<dbReference type="Reactome" id="R-HSA-6781827">
    <property type="pathway name" value="Transcription-Coupled Nucleotide Excision Repair (TC-NER)"/>
</dbReference>
<dbReference type="Reactome" id="R-HSA-6782135">
    <property type="pathway name" value="Dual incision in TC-NER"/>
</dbReference>
<dbReference type="Reactome" id="R-HSA-6782210">
    <property type="pathway name" value="Gap-filling DNA repair synthesis and ligation in TC-NER"/>
</dbReference>
<dbReference type="Reactome" id="R-HSA-6796648">
    <property type="pathway name" value="TP53 Regulates Transcription of DNA Repair Genes"/>
</dbReference>
<dbReference type="Reactome" id="R-HSA-6803529">
    <property type="pathway name" value="FGFR2 alternative splicing"/>
</dbReference>
<dbReference type="Reactome" id="R-HSA-6807505">
    <property type="pathway name" value="RNA polymerase II transcribes snRNA genes"/>
</dbReference>
<dbReference type="Reactome" id="R-HSA-72086">
    <property type="pathway name" value="mRNA Capping"/>
</dbReference>
<dbReference type="Reactome" id="R-HSA-72163">
    <property type="pathway name" value="mRNA Splicing - Major Pathway"/>
</dbReference>
<dbReference type="Reactome" id="R-HSA-72165">
    <property type="pathway name" value="mRNA Splicing - Minor Pathway"/>
</dbReference>
<dbReference type="Reactome" id="R-HSA-72203">
    <property type="pathway name" value="Processing of Capped Intron-Containing Pre-mRNA"/>
</dbReference>
<dbReference type="Reactome" id="R-HSA-73762">
    <property type="pathway name" value="RNA Polymerase I Transcription Initiation"/>
</dbReference>
<dbReference type="Reactome" id="R-HSA-73772">
    <property type="pathway name" value="RNA Polymerase I Promoter Escape"/>
</dbReference>
<dbReference type="Reactome" id="R-HSA-73776">
    <property type="pathway name" value="RNA Polymerase II Promoter Escape"/>
</dbReference>
<dbReference type="Reactome" id="R-HSA-73779">
    <property type="pathway name" value="RNA Polymerase II Transcription Pre-Initiation And Promoter Opening"/>
</dbReference>
<dbReference type="Reactome" id="R-HSA-73780">
    <property type="pathway name" value="RNA Polymerase III Chain Elongation"/>
</dbReference>
<dbReference type="Reactome" id="R-HSA-73863">
    <property type="pathway name" value="RNA Polymerase I Transcription Termination"/>
</dbReference>
<dbReference type="Reactome" id="R-HSA-73980">
    <property type="pathway name" value="RNA Polymerase III Transcription Termination"/>
</dbReference>
<dbReference type="Reactome" id="R-HSA-749476">
    <property type="pathway name" value="RNA Polymerase III Abortive And Retractive Initiation"/>
</dbReference>
<dbReference type="Reactome" id="R-HSA-75953">
    <property type="pathway name" value="RNA Polymerase II Transcription Initiation"/>
</dbReference>
<dbReference type="Reactome" id="R-HSA-75955">
    <property type="pathway name" value="RNA Polymerase II Transcription Elongation"/>
</dbReference>
<dbReference type="Reactome" id="R-HSA-76042">
    <property type="pathway name" value="RNA Polymerase II Transcription Initiation And Promoter Clearance"/>
</dbReference>
<dbReference type="Reactome" id="R-HSA-76061">
    <property type="pathway name" value="RNA Polymerase III Transcription Initiation From Type 1 Promoter"/>
</dbReference>
<dbReference type="Reactome" id="R-HSA-76066">
    <property type="pathway name" value="RNA Polymerase III Transcription Initiation From Type 2 Promoter"/>
</dbReference>
<dbReference type="Reactome" id="R-HSA-76071">
    <property type="pathway name" value="RNA Polymerase III Transcription Initiation From Type 3 Promoter"/>
</dbReference>
<dbReference type="Reactome" id="R-HSA-77075">
    <property type="pathway name" value="RNA Pol II CTD phosphorylation and interaction with CE"/>
</dbReference>
<dbReference type="Reactome" id="R-HSA-8851708">
    <property type="pathway name" value="Signaling by FGFR2 IIIa TM"/>
</dbReference>
<dbReference type="Reactome" id="R-HSA-9018519">
    <property type="pathway name" value="Estrogen-dependent gene expression"/>
</dbReference>
<dbReference type="Reactome" id="R-HSA-9670095">
    <property type="pathway name" value="Inhibition of DNA recombination at telomere"/>
</dbReference>
<dbReference type="SignaLink" id="P53803"/>
<dbReference type="SIGNOR" id="P53803"/>
<dbReference type="BioGRID-ORCS" id="5440">
    <property type="hits" value="734 hits in 1073 CRISPR screens"/>
</dbReference>
<dbReference type="ChiTaRS" id="POLR2K">
    <property type="organism name" value="human"/>
</dbReference>
<dbReference type="EvolutionaryTrace" id="P53803"/>
<dbReference type="GeneWiki" id="POLR2K"/>
<dbReference type="GenomeRNAi" id="5440"/>
<dbReference type="Pharos" id="P53803">
    <property type="development level" value="Tbio"/>
</dbReference>
<dbReference type="PRO" id="PR:P53803"/>
<dbReference type="Proteomes" id="UP000005640">
    <property type="component" value="Chromosome 8"/>
</dbReference>
<dbReference type="RNAct" id="P53803">
    <property type="molecule type" value="protein"/>
</dbReference>
<dbReference type="Bgee" id="ENSG00000147669">
    <property type="expression patterns" value="Expressed in islet of Langerhans and 212 other cell types or tissues"/>
</dbReference>
<dbReference type="ExpressionAtlas" id="P53803">
    <property type="expression patterns" value="baseline and differential"/>
</dbReference>
<dbReference type="GO" id="GO:0005829">
    <property type="term" value="C:cytosol"/>
    <property type="evidence" value="ECO:0000304"/>
    <property type="project" value="Reactome"/>
</dbReference>
<dbReference type="GO" id="GO:0005654">
    <property type="term" value="C:nucleoplasm"/>
    <property type="evidence" value="ECO:0000304"/>
    <property type="project" value="Reactome"/>
</dbReference>
<dbReference type="GO" id="GO:0005634">
    <property type="term" value="C:nucleus"/>
    <property type="evidence" value="ECO:0000314"/>
    <property type="project" value="UniProtKB"/>
</dbReference>
<dbReference type="GO" id="GO:0005736">
    <property type="term" value="C:RNA polymerase I complex"/>
    <property type="evidence" value="ECO:0000314"/>
    <property type="project" value="UniProtKB"/>
</dbReference>
<dbReference type="GO" id="GO:0005665">
    <property type="term" value="C:RNA polymerase II, core complex"/>
    <property type="evidence" value="ECO:0000314"/>
    <property type="project" value="UniProtKB"/>
</dbReference>
<dbReference type="GO" id="GO:0005666">
    <property type="term" value="C:RNA polymerase III complex"/>
    <property type="evidence" value="ECO:0000314"/>
    <property type="project" value="UniProtKB"/>
</dbReference>
<dbReference type="GO" id="GO:0003677">
    <property type="term" value="F:DNA binding"/>
    <property type="evidence" value="ECO:0007669"/>
    <property type="project" value="InterPro"/>
</dbReference>
<dbReference type="GO" id="GO:0003899">
    <property type="term" value="F:DNA-directed RNA polymerase activity"/>
    <property type="evidence" value="ECO:0007669"/>
    <property type="project" value="InterPro"/>
</dbReference>
<dbReference type="GO" id="GO:0008270">
    <property type="term" value="F:zinc ion binding"/>
    <property type="evidence" value="ECO:0000304"/>
    <property type="project" value="ProtInc"/>
</dbReference>
<dbReference type="GO" id="GO:0006356">
    <property type="term" value="P:regulation of transcription by RNA polymerase I"/>
    <property type="evidence" value="ECO:0000304"/>
    <property type="project" value="ProtInc"/>
</dbReference>
<dbReference type="GO" id="GO:0006366">
    <property type="term" value="P:transcription by RNA polymerase II"/>
    <property type="evidence" value="ECO:0000314"/>
    <property type="project" value="UniProtKB"/>
</dbReference>
<dbReference type="GO" id="GO:0006383">
    <property type="term" value="P:transcription by RNA polymerase III"/>
    <property type="evidence" value="ECO:0000304"/>
    <property type="project" value="ProtInc"/>
</dbReference>
<dbReference type="FunFam" id="2.20.28.30:FF:000001">
    <property type="entry name" value="DNA-directed RNA polymerases I, II, and III subunit RPABC4"/>
    <property type="match status" value="1"/>
</dbReference>
<dbReference type="Gene3D" id="2.20.28.30">
    <property type="entry name" value="RNA polymerase ii, chain L"/>
    <property type="match status" value="1"/>
</dbReference>
<dbReference type="InterPro" id="IPR006591">
    <property type="entry name" value="RNAP_P/RPABC4"/>
</dbReference>
<dbReference type="InterPro" id="IPR039747">
    <property type="entry name" value="RPABC4"/>
</dbReference>
<dbReference type="InterPro" id="IPR029040">
    <property type="entry name" value="RPABC4/Spt4"/>
</dbReference>
<dbReference type="PANTHER" id="PTHR12056">
    <property type="entry name" value="DNA-DIRECTED RNA POLYMERASES I, II, AND III"/>
    <property type="match status" value="1"/>
</dbReference>
<dbReference type="PANTHER" id="PTHR12056:SF4">
    <property type="entry name" value="DNA-DIRECTED RNA POLYMERASES I, II, AND III SUBUNIT RPABC4"/>
    <property type="match status" value="1"/>
</dbReference>
<dbReference type="Pfam" id="PF03604">
    <property type="entry name" value="Zn_ribbon_RPAB4"/>
    <property type="match status" value="1"/>
</dbReference>
<dbReference type="SMART" id="SM00659">
    <property type="entry name" value="RPOLCX"/>
    <property type="match status" value="1"/>
</dbReference>
<dbReference type="SUPFAM" id="SSF63393">
    <property type="entry name" value="RNA polymerase subunits"/>
    <property type="match status" value="1"/>
</dbReference>
<organism>
    <name type="scientific">Homo sapiens</name>
    <name type="common">Human</name>
    <dbReference type="NCBI Taxonomy" id="9606"/>
    <lineage>
        <taxon>Eukaryota</taxon>
        <taxon>Metazoa</taxon>
        <taxon>Chordata</taxon>
        <taxon>Craniata</taxon>
        <taxon>Vertebrata</taxon>
        <taxon>Euteleostomi</taxon>
        <taxon>Mammalia</taxon>
        <taxon>Eutheria</taxon>
        <taxon>Euarchontoglires</taxon>
        <taxon>Primates</taxon>
        <taxon>Haplorrhini</taxon>
        <taxon>Catarrhini</taxon>
        <taxon>Hominidae</taxon>
        <taxon>Homo</taxon>
    </lineage>
</organism>
<reference key="1">
    <citation type="journal article" date="1995" name="Mol. Cell. Biol.">
        <title>Four subunits that are shared by the three classes of RNA polymerase are functionally interchangeable between Homo sapiens and Saccharomyces cerevisiae.</title>
        <authorList>
            <person name="Shpakovski G.V."/>
            <person name="Acker J."/>
            <person name="Wintzerith M."/>
            <person name="Lacroix J.F."/>
            <person name="Thuriaux P."/>
            <person name="Vigneron M."/>
        </authorList>
    </citation>
    <scope>NUCLEOTIDE SEQUENCE [MRNA]</scope>
</reference>
<reference key="2">
    <citation type="submission" date="1999-12" db="EMBL/GenBank/DDBJ databases">
        <title>Organization of genes encoding subunits of eucaryotic nuclear RNA polymerases shows non random intron distribution and correlates with the subunit modular structure.</title>
        <authorList>
            <person name="Shpakovski G.V."/>
            <person name="Lebedenko E.N."/>
            <person name="Grandemange S."/>
            <person name="Schaller S."/>
            <person name="Vigneron M."/>
            <person name="Kedinger C."/>
        </authorList>
    </citation>
    <scope>NUCLEOTIDE SEQUENCE [GENOMIC DNA]</scope>
    <source>
        <tissue>Placenta</tissue>
    </source>
</reference>
<reference key="3">
    <citation type="submission" date="2004-06" db="EMBL/GenBank/DDBJ databases">
        <title>Cloning of human full open reading frames in Gateway(TM) system entry vector (pDONR201).</title>
        <authorList>
            <person name="Ebert L."/>
            <person name="Schick M."/>
            <person name="Neubert P."/>
            <person name="Schatten R."/>
            <person name="Henze S."/>
            <person name="Korn B."/>
        </authorList>
    </citation>
    <scope>NUCLEOTIDE SEQUENCE [LARGE SCALE MRNA]</scope>
</reference>
<reference key="4">
    <citation type="submission" date="2005-07" db="EMBL/GenBank/DDBJ databases">
        <authorList>
            <person name="Mural R.J."/>
            <person name="Istrail S."/>
            <person name="Sutton G.G."/>
            <person name="Florea L."/>
            <person name="Halpern A.L."/>
            <person name="Mobarry C.M."/>
            <person name="Lippert R."/>
            <person name="Walenz B."/>
            <person name="Shatkay H."/>
            <person name="Dew I."/>
            <person name="Miller J.R."/>
            <person name="Flanigan M.J."/>
            <person name="Edwards N.J."/>
            <person name="Bolanos R."/>
            <person name="Fasulo D."/>
            <person name="Halldorsson B.V."/>
            <person name="Hannenhalli S."/>
            <person name="Turner R."/>
            <person name="Yooseph S."/>
            <person name="Lu F."/>
            <person name="Nusskern D.R."/>
            <person name="Shue B.C."/>
            <person name="Zheng X.H."/>
            <person name="Zhong F."/>
            <person name="Delcher A.L."/>
            <person name="Huson D.H."/>
            <person name="Kravitz S.A."/>
            <person name="Mouchard L."/>
            <person name="Reinert K."/>
            <person name="Remington K.A."/>
            <person name="Clark A.G."/>
            <person name="Waterman M.S."/>
            <person name="Eichler E.E."/>
            <person name="Adams M.D."/>
            <person name="Hunkapiller M.W."/>
            <person name="Myers E.W."/>
            <person name="Venter J.C."/>
        </authorList>
    </citation>
    <scope>NUCLEOTIDE SEQUENCE [LARGE SCALE GENOMIC DNA]</scope>
</reference>
<reference key="5">
    <citation type="journal article" date="2004" name="Genome Res.">
        <title>The status, quality, and expansion of the NIH full-length cDNA project: the Mammalian Gene Collection (MGC).</title>
        <authorList>
            <consortium name="The MGC Project Team"/>
        </authorList>
    </citation>
    <scope>NUCLEOTIDE SEQUENCE [LARGE SCALE MRNA]</scope>
    <source>
        <tissue>Ovary</tissue>
        <tissue>Placenta</tissue>
    </source>
</reference>
<reference key="6">
    <citation type="journal article" date="2010" name="Genome Res.">
        <title>Defining the RNA polymerase III transcriptome: Genome-wide localization of the RNA polymerase III transcription machinery in human cells.</title>
        <authorList>
            <person name="Canella D."/>
            <person name="Praz V."/>
            <person name="Reina J.H."/>
            <person name="Cousin P."/>
            <person name="Hernandez N."/>
        </authorList>
    </citation>
    <scope>FUNCTION OF POL III</scope>
</reference>
<reference key="7">
    <citation type="journal article" date="2016" name="Nature">
        <title>Near-atomic resolution visualization of human transcription promoter opening.</title>
        <authorList>
            <person name="He Y."/>
            <person name="Yan C."/>
            <person name="Fang J."/>
            <person name="Inouye C."/>
            <person name="Tjian R."/>
            <person name="Ivanov I."/>
            <person name="Nogales E."/>
        </authorList>
    </citation>
    <scope>STRUCTURE BY ELECTRON MICROSCOPY (3.90 ANGSTROMS) IN COMPLEX WITH ZN(2+)</scope>
    <scope>FUNCTION OF POL II</scope>
    <scope>SUBUNIT</scope>
</reference>
<reference key="8">
    <citation type="journal article" date="2018" name="Nat. Struct. Mol. Biol.">
        <title>Architecture of Pol II(G) and molecular mechanism of transcription regulation by Gdown1.</title>
        <authorList>
            <person name="Jishage M."/>
            <person name="Yu X."/>
            <person name="Shi Y."/>
            <person name="Ganesan S.J."/>
            <person name="Chen W.Y."/>
            <person name="Sali A."/>
            <person name="Chait B.T."/>
            <person name="Asturias F.J."/>
            <person name="Roeder R.G."/>
        </authorList>
    </citation>
    <scope>STRUCTURE BY ELECTRON MICROSCOPY (3.90 ANGSTROMS)</scope>
    <scope>FUNCTION OF POL II</scope>
    <scope>SUBUNIT</scope>
</reference>
<reference key="9">
    <citation type="journal article" date="2020" name="Nat. Commun.">
        <title>Structure of human RNA polymerase III.</title>
        <authorList>
            <person name="Ramsay E.P."/>
            <person name="Abascal-Palacios G."/>
            <person name="Daiss J.L."/>
            <person name="King H."/>
            <person name="Gouge J."/>
            <person name="Pilsl M."/>
            <person name="Beuron F."/>
            <person name="Morris E."/>
            <person name="Gunkel P."/>
            <person name="Engel C."/>
            <person name="Vannini A."/>
        </authorList>
    </citation>
    <scope>STRUCTURE BY ELECTRON MICROSCOPY (4.00 ANGSTROMS)</scope>
    <scope>SUBUNIT</scope>
    <scope>SUBCELLULAR LOCATION</scope>
</reference>
<reference key="10">
    <citation type="journal article" date="2021" name="Cell Discov.">
        <title>Structure of the human RNA polymerase I elongation complex.</title>
        <authorList>
            <person name="Zhao D."/>
            <person name="Liu W."/>
            <person name="Chen K."/>
            <person name="Wu Z."/>
            <person name="Yang H."/>
            <person name="Xu Y."/>
        </authorList>
    </citation>
    <scope>STRUCTURE BY ELECTRON MICROSCOPY (2.81 ANGSTROMS)</scope>
    <scope>FUNCTION OF POL I</scope>
    <scope>SUBUNIT</scope>
</reference>
<reference key="11">
    <citation type="journal article" date="2021" name="Cell Res.">
        <title>Structure of human RNA polymerase III elongation complex.</title>
        <authorList>
            <person name="Li L."/>
            <person name="Yu Z."/>
            <person name="Zhao D."/>
            <person name="Ren Y."/>
            <person name="Hou H."/>
            <person name="Xu Y."/>
        </authorList>
    </citation>
    <scope>STRUCTURE BY ELECTRON MICROSCOPY (3.35 ANGSTROMS) IN COMPLEX WITH ZN(2+)</scope>
    <scope>SUBUNIT</scope>
</reference>
<reference key="12">
    <citation type="journal article" date="2021" name="Nat. Commun.">
        <title>Structural insights into RNA polymerase III-mediated transcription termination through trapping poly-deoxythymidine.</title>
        <authorList>
            <person name="Hou H."/>
            <person name="Li Y."/>
            <person name="Wang M."/>
            <person name="Liu A."/>
            <person name="Yu Z."/>
            <person name="Chen K."/>
            <person name="Zhao D."/>
            <person name="Xu Y."/>
        </authorList>
    </citation>
    <scope>STRUCTURE BY ELECTRON MICROSCOPY (3.60 ANGSTROMS)</scope>
    <scope>SUBUNIT</scope>
</reference>
<reference key="13">
    <citation type="journal article" date="2021" name="Nat. Struct. Mol. Biol.">
        <title>Cryo-EM structures of human RNA polymerase III in its unbound and transcribing states.</title>
        <authorList>
            <person name="Girbig M."/>
            <person name="Misiaszek A.D."/>
            <person name="Vorlander M.K."/>
            <person name="Lafita A."/>
            <person name="Grotsch H."/>
            <person name="Baudin F."/>
            <person name="Bateman A."/>
            <person name="Muller C.W."/>
        </authorList>
    </citation>
    <scope>STRUCTURE BY ELECTRON MICROSCOPY (2.80 ANGSTROMS) IN COMPLEX WITH ZN(2+)</scope>
    <scope>SUBUNIT</scope>
</reference>
<reference key="14">
    <citation type="journal article" date="2021" name="Nat. Struct. Mol. Biol.">
        <title>Cryo-EM structures of human RNA polymerase I.</title>
        <authorList>
            <person name="Misiaszek A.D."/>
            <person name="Girbig M."/>
            <person name="Grotsch H."/>
            <person name="Baudin F."/>
            <person name="Murciano B."/>
            <person name="Lafita A."/>
            <person name="Muller C.W."/>
        </authorList>
    </citation>
    <scope>STRUCTURE BY ELECTRON MICROSCOPY (2.70 ANGSTROMS)</scope>
    <scope>FUNCTION OF POL I</scope>
    <scope>SUBUNIT</scope>
    <scope>SUBCELLULAR LOCATION</scope>
</reference>
<reference key="15">
    <citation type="journal article" date="2021" name="Nat. Struct. Mol. Biol.">
        <title>Structural insights into transcriptional regulation of human RNA polymerase III.</title>
        <authorList>
            <person name="Wang Q."/>
            <person name="Li S."/>
            <person name="Wan F."/>
            <person name="Xu Y."/>
            <person name="Wu Z."/>
            <person name="Cao M."/>
            <person name="Lan P."/>
            <person name="Lei M."/>
            <person name="Wu J."/>
        </authorList>
    </citation>
    <scope>STRUCTURE BY ELECTRON MICROSCOPY (2.90 ANGSTROMS) IN COMPLEX WITH ZN(2+)</scope>
    <scope>SUBUNIT</scope>
</reference>
<reference key="16">
    <citation type="journal article" date="2022" name="Life. Sci Alliance">
        <title>The human RNA polymerase I structure reveals an HMG-like docking domain specific to metazoans.</title>
        <authorList>
            <person name="Daiss J.L."/>
            <person name="Pilsl M."/>
            <person name="Straub K."/>
            <person name="Bleckmann A."/>
            <person name="Hocherl M."/>
            <person name="Heiss F.B."/>
            <person name="Abascal-Palacios G."/>
            <person name="Ramsay E.P."/>
            <person name="Tluckova K."/>
            <person name="Mars J.C."/>
            <person name="Furtges T."/>
            <person name="Bruckmann A."/>
            <person name="Rudack T."/>
            <person name="Bernecky C."/>
            <person name="Lamour V."/>
            <person name="Panov K."/>
            <person name="Vannini A."/>
            <person name="Moss T."/>
            <person name="Engel C."/>
        </authorList>
    </citation>
    <scope>STRUCTURE BY ELECTRON MICROSCOPY (4.09 ANGSTROMS)</scope>
    <scope>FUNCTION OF POL I</scope>
    <scope>SUBUNIT</scope>
    <scope>SUBCELLULAR LOCATION</scope>
</reference>
<accession>P53803</accession>
<accession>Q6IBD4</accession>